<protein>
    <recommendedName>
        <fullName evidence="8">Deoxycytidine kinase 1</fullName>
        <shortName evidence="6">XldCK</shortName>
        <ecNumber evidence="5">2.7.1.74</ecNumber>
    </recommendedName>
    <alternativeName>
        <fullName evidence="8">Deoxyadenosine kinase 1</fullName>
        <ecNumber evidence="5">2.7.1.76</ecNumber>
    </alternativeName>
    <alternativeName>
        <fullName evidence="8">Deoxyguanosine kinase 1</fullName>
        <ecNumber evidence="5">2.7.1.113</ecNumber>
    </alternativeName>
</protein>
<evidence type="ECO:0000250" key="1">
    <source>
        <dbReference type="UniProtKB" id="P27707"/>
    </source>
</evidence>
<evidence type="ECO:0000255" key="2">
    <source>
        <dbReference type="PIRSR" id="PIRSR000705-1"/>
    </source>
</evidence>
<evidence type="ECO:0000255" key="3">
    <source>
        <dbReference type="PIRSR" id="PIRSR000705-2"/>
    </source>
</evidence>
<evidence type="ECO:0000255" key="4">
    <source>
        <dbReference type="PIRSR" id="PIRSR000705-3"/>
    </source>
</evidence>
<evidence type="ECO:0000269" key="5">
    <source>
    </source>
</evidence>
<evidence type="ECO:0000303" key="6">
    <source>
    </source>
</evidence>
<evidence type="ECO:0000305" key="7"/>
<evidence type="ECO:0000305" key="8">
    <source>
    </source>
</evidence>
<evidence type="ECO:0000312" key="9">
    <source>
        <dbReference type="EMBL" id="AAH84070.1"/>
    </source>
</evidence>
<evidence type="ECO:0000312" key="10">
    <source>
        <dbReference type="EMBL" id="OCU00010.1"/>
    </source>
</evidence>
<evidence type="ECO:0000312" key="11">
    <source>
        <dbReference type="Proteomes" id="UP000186698"/>
    </source>
</evidence>
<evidence type="ECO:0000312" key="12">
    <source>
        <dbReference type="Xenbase" id="XB-GENE-17335585"/>
    </source>
</evidence>
<keyword id="KW-0067">ATP-binding</keyword>
<keyword id="KW-0418">Kinase</keyword>
<keyword id="KW-0547">Nucleotide-binding</keyword>
<keyword id="KW-0539">Nucleus</keyword>
<keyword id="KW-1185">Reference proteome</keyword>
<keyword id="KW-0808">Transferase</keyword>
<sequence length="265" mass="31112">MATPPKRICIDVPASPSGNKCKVKRISIEGNIAAGKSTFVNILKKANEEWDVVPEPIARWCNIQSCKDEFEELTTSQKSGGNLLQMMYEKPERWSFTFQSYACLSRIRAQLKALGGKLKEAENPVLFFERSVYSDRYIFASNLYEAECMNETEWTVYQDWHDWMNSQFGADLELDGIIYLRAIPEKCLNRVYTRGREEEQGIPMEYLEKLHYKHETWLHHRTLRTDFEYLQEIPILTLDVNEDFRDNKQKQESLIEKVKEFLSTL</sequence>
<feature type="chain" id="PRO_0000449296" description="Deoxycytidine kinase 1">
    <location>
        <begin position="1"/>
        <end position="265"/>
    </location>
</feature>
<feature type="active site" description="Proton acceptor" evidence="2">
    <location>
        <position position="129"/>
    </location>
</feature>
<feature type="binding site" evidence="4">
    <location>
        <begin position="30"/>
        <end position="38"/>
    </location>
    <ligand>
        <name>ATP</name>
        <dbReference type="ChEBI" id="CHEBI:30616"/>
    </ligand>
</feature>
<feature type="binding site" evidence="3">
    <location>
        <position position="55"/>
    </location>
    <ligand>
        <name>substrate</name>
    </ligand>
</feature>
<feature type="binding site" evidence="3">
    <location>
        <position position="88"/>
    </location>
    <ligand>
        <name>substrate</name>
    </ligand>
</feature>
<feature type="binding site" evidence="3">
    <location>
        <position position="99"/>
    </location>
    <ligand>
        <name>substrate</name>
    </ligand>
</feature>
<feature type="binding site" evidence="3">
    <location>
        <position position="130"/>
    </location>
    <ligand>
        <name>substrate</name>
    </ligand>
</feature>
<feature type="binding site" evidence="3">
    <location>
        <position position="135"/>
    </location>
    <ligand>
        <name>substrate</name>
    </ligand>
</feature>
<feature type="binding site" evidence="4">
    <location>
        <begin position="190"/>
        <end position="194"/>
    </location>
    <ligand>
        <name>ATP</name>
        <dbReference type="ChEBI" id="CHEBI:30616"/>
    </ligand>
</feature>
<feature type="binding site" evidence="3">
    <location>
        <position position="199"/>
    </location>
    <ligand>
        <name>substrate</name>
    </ligand>
</feature>
<feature type="binding site" evidence="4">
    <location>
        <begin position="242"/>
        <end position="244"/>
    </location>
    <ligand>
        <name>ATP</name>
        <dbReference type="ChEBI" id="CHEBI:30616"/>
    </ligand>
</feature>
<feature type="sequence conflict" description="In Ref. 2; AAH84070." evidence="7" ref="2">
    <location>
        <begin position="23"/>
        <end position="24"/>
    </location>
</feature>
<organism evidence="11">
    <name type="scientific">Xenopus laevis</name>
    <name type="common">African clawed frog</name>
    <dbReference type="NCBI Taxonomy" id="8355"/>
    <lineage>
        <taxon>Eukaryota</taxon>
        <taxon>Metazoa</taxon>
        <taxon>Chordata</taxon>
        <taxon>Craniata</taxon>
        <taxon>Vertebrata</taxon>
        <taxon>Euteleostomi</taxon>
        <taxon>Amphibia</taxon>
        <taxon>Batrachia</taxon>
        <taxon>Anura</taxon>
        <taxon>Pipoidea</taxon>
        <taxon>Pipidae</taxon>
        <taxon>Xenopodinae</taxon>
        <taxon>Xenopus</taxon>
        <taxon>Xenopus</taxon>
    </lineage>
</organism>
<proteinExistence type="evidence at protein level"/>
<comment type="function">
    <text evidence="5">Phosphorylates the deoxyribonucleosides deoxyadenosine, deoxycytidine and deoxyguanosine with highest activity against deoxycytidine followed by deadenosine and deoxyguanosine (PubMed:27906638). Shows only very minor activity against deoxyuridine and deoxythymidine (PubMed:27906638).</text>
</comment>
<comment type="catalytic activity">
    <reaction evidence="5">
        <text>2'-deoxycytidine + a ribonucleoside 5'-triphosphate = dCMP + a ribonucleoside 5'-diphosphate + H(+)</text>
        <dbReference type="Rhea" id="RHEA:20061"/>
        <dbReference type="ChEBI" id="CHEBI:15378"/>
        <dbReference type="ChEBI" id="CHEBI:15698"/>
        <dbReference type="ChEBI" id="CHEBI:57566"/>
        <dbReference type="ChEBI" id="CHEBI:57930"/>
        <dbReference type="ChEBI" id="CHEBI:61557"/>
        <dbReference type="EC" id="2.7.1.74"/>
    </reaction>
</comment>
<comment type="catalytic activity">
    <reaction evidence="5">
        <text>2'-deoxyguanosine + ATP = dGMP + ADP + H(+)</text>
        <dbReference type="Rhea" id="RHEA:19201"/>
        <dbReference type="ChEBI" id="CHEBI:15378"/>
        <dbReference type="ChEBI" id="CHEBI:17172"/>
        <dbReference type="ChEBI" id="CHEBI:30616"/>
        <dbReference type="ChEBI" id="CHEBI:57673"/>
        <dbReference type="ChEBI" id="CHEBI:456216"/>
        <dbReference type="EC" id="2.7.1.113"/>
    </reaction>
</comment>
<comment type="catalytic activity">
    <reaction evidence="5">
        <text>2'-deoxyadenosine + ATP = dAMP + ADP + H(+)</text>
        <dbReference type="Rhea" id="RHEA:23452"/>
        <dbReference type="ChEBI" id="CHEBI:15378"/>
        <dbReference type="ChEBI" id="CHEBI:17256"/>
        <dbReference type="ChEBI" id="CHEBI:30616"/>
        <dbReference type="ChEBI" id="CHEBI:58245"/>
        <dbReference type="ChEBI" id="CHEBI:456216"/>
        <dbReference type="EC" id="2.7.1.76"/>
    </reaction>
</comment>
<comment type="biophysicochemical properties">
    <kinetics>
        <KM evidence="5">0.34 uM for deoxycytidine</KM>
        <KM evidence="5">527 uM for deoxyguanosine</KM>
        <KM evidence="5">533 uM for deoxyadenosine</KM>
        <KM evidence="5">12457 uM for deoxythymidine</KM>
        <KM evidence="5">15081 uM for deoxyuridine</KM>
        <Vmax evidence="5">0.1 umol/min/mg enzyme toward deoxycytidine</Vmax>
        <Vmax evidence="5">6.6 umol/min/mg enzyme toward deoxyguanosine</Vmax>
        <Vmax evidence="5">5.2 umol/min/mg enzyme toward deoxyadenosine</Vmax>
        <Vmax evidence="5">0.6 umol/min/mg enzyme toward deoxythymidine</Vmax>
        <Vmax evidence="5">2.5 umol/min/mg enzyme toward deoxyuridine</Vmax>
        <text evidence="5">kcat is 0.09 sec(-1) with deoxycytodine as substrate. kcat is 3.40 sec(-1) with deoxyguanosine as substrate. kcat is 2.73 sec(-1) with deoxyadenosine as substrate. kcat is 0.29 sec(-1) with deoxythymidine as substrate. kcat is 1.27 sec(-1) with deoxyuridine as substrate.</text>
    </kinetics>
</comment>
<comment type="subunit">
    <text evidence="1">Homodimer.</text>
</comment>
<comment type="subcellular location">
    <subcellularLocation>
        <location evidence="1">Nucleus</location>
    </subcellularLocation>
</comment>
<comment type="similarity">
    <text evidence="7">Belongs to the DCK/DGK family.</text>
</comment>
<gene>
    <name evidence="12" type="primary">dck.1.L</name>
    <name evidence="12" type="synonym">dck</name>
    <name evidence="10" type="ORF">XELAEV_18005792mg</name>
</gene>
<dbReference type="EC" id="2.7.1.74" evidence="5"/>
<dbReference type="EC" id="2.7.1.76" evidence="5"/>
<dbReference type="EC" id="2.7.1.113" evidence="5"/>
<dbReference type="EMBL" id="CM004466">
    <property type="protein sequence ID" value="OCU00010.1"/>
    <property type="molecule type" value="Genomic_DNA"/>
</dbReference>
<dbReference type="EMBL" id="BC084070">
    <property type="protein sequence ID" value="AAH84070.1"/>
    <property type="molecule type" value="mRNA"/>
</dbReference>
<dbReference type="RefSeq" id="NP_001088163.1">
    <property type="nucleotide sequence ID" value="NM_001094694.1"/>
</dbReference>
<dbReference type="SMR" id="A0A1L8HV70"/>
<dbReference type="STRING" id="8355.A0A1L8HV70"/>
<dbReference type="PaxDb" id="8355-A0A1L8HV70"/>
<dbReference type="GeneID" id="494987"/>
<dbReference type="KEGG" id="xla:494987"/>
<dbReference type="AGR" id="Xenbase:XB-GENE-17335585"/>
<dbReference type="CTD" id="494987"/>
<dbReference type="Xenbase" id="XB-GENE-17335585">
    <property type="gene designation" value="dck.L"/>
</dbReference>
<dbReference type="OMA" id="KDKHDSM"/>
<dbReference type="OrthoDB" id="567086at2759"/>
<dbReference type="BRENDA" id="2.7.1.74">
    <property type="organism ID" value="6725"/>
</dbReference>
<dbReference type="Proteomes" id="UP000186698">
    <property type="component" value="Chromosome 1L"/>
</dbReference>
<dbReference type="Proteomes" id="UP000694892">
    <property type="component" value="Chromosome 1L"/>
</dbReference>
<dbReference type="Bgee" id="494987">
    <property type="expression patterns" value="Expressed in egg cell and 19 other cell types or tissues"/>
</dbReference>
<dbReference type="GO" id="GO:0005737">
    <property type="term" value="C:cytoplasm"/>
    <property type="evidence" value="ECO:0000318"/>
    <property type="project" value="GO_Central"/>
</dbReference>
<dbReference type="GO" id="GO:0005739">
    <property type="term" value="C:mitochondrion"/>
    <property type="evidence" value="ECO:0000318"/>
    <property type="project" value="GO_Central"/>
</dbReference>
<dbReference type="GO" id="GO:0005634">
    <property type="term" value="C:nucleus"/>
    <property type="evidence" value="ECO:0007669"/>
    <property type="project" value="UniProtKB-SubCell"/>
</dbReference>
<dbReference type="GO" id="GO:0005524">
    <property type="term" value="F:ATP binding"/>
    <property type="evidence" value="ECO:0007669"/>
    <property type="project" value="UniProtKB-KW"/>
</dbReference>
<dbReference type="GO" id="GO:0004136">
    <property type="term" value="F:deoxyadenosine kinase activity"/>
    <property type="evidence" value="ECO:0000314"/>
    <property type="project" value="UniProtKB"/>
</dbReference>
<dbReference type="GO" id="GO:0004137">
    <property type="term" value="F:deoxycytidine kinase activity"/>
    <property type="evidence" value="ECO:0000314"/>
    <property type="project" value="UniProtKB"/>
</dbReference>
<dbReference type="GO" id="GO:0004138">
    <property type="term" value="F:deoxyguanosine kinase activity"/>
    <property type="evidence" value="ECO:0000314"/>
    <property type="project" value="UniProtKB"/>
</dbReference>
<dbReference type="GO" id="GO:0009157">
    <property type="term" value="P:deoxyribonucleoside monophosphate biosynthetic process"/>
    <property type="evidence" value="ECO:0000314"/>
    <property type="project" value="UniProtKB"/>
</dbReference>
<dbReference type="CDD" id="cd01673">
    <property type="entry name" value="dNK"/>
    <property type="match status" value="1"/>
</dbReference>
<dbReference type="FunFam" id="3.40.50.300:FF:000461">
    <property type="entry name" value="Deoxycytidine kinase"/>
    <property type="match status" value="1"/>
</dbReference>
<dbReference type="Gene3D" id="3.40.50.300">
    <property type="entry name" value="P-loop containing nucleotide triphosphate hydrolases"/>
    <property type="match status" value="1"/>
</dbReference>
<dbReference type="InterPro" id="IPR002624">
    <property type="entry name" value="DCK/DGK"/>
</dbReference>
<dbReference type="InterPro" id="IPR050566">
    <property type="entry name" value="Deoxyribonucleoside_kinase"/>
</dbReference>
<dbReference type="InterPro" id="IPR031314">
    <property type="entry name" value="DNK_dom"/>
</dbReference>
<dbReference type="InterPro" id="IPR027417">
    <property type="entry name" value="P-loop_NTPase"/>
</dbReference>
<dbReference type="PANTHER" id="PTHR10513:SF19">
    <property type="entry name" value="DEOXYCYTIDINE KINASE"/>
    <property type="match status" value="1"/>
</dbReference>
<dbReference type="PANTHER" id="PTHR10513">
    <property type="entry name" value="DEOXYNUCLEOSIDE KINASE"/>
    <property type="match status" value="1"/>
</dbReference>
<dbReference type="Pfam" id="PF01712">
    <property type="entry name" value="dNK"/>
    <property type="match status" value="1"/>
</dbReference>
<dbReference type="PIRSF" id="PIRSF000705">
    <property type="entry name" value="DNK"/>
    <property type="match status" value="1"/>
</dbReference>
<dbReference type="SUPFAM" id="SSF52540">
    <property type="entry name" value="P-loop containing nucleoside triphosphate hydrolases"/>
    <property type="match status" value="1"/>
</dbReference>
<accession>A0A1L8HV70</accession>
<accession>Q5XHI7</accession>
<reference evidence="11" key="1">
    <citation type="journal article" date="2016" name="Nature">
        <title>Genome evolution in the allotetraploid frog Xenopus laevis.</title>
        <authorList>
            <person name="Session A.M."/>
            <person name="Uno Y."/>
            <person name="Kwon T."/>
            <person name="Chapman J.A."/>
            <person name="Toyoda A."/>
            <person name="Takahashi S."/>
            <person name="Fukui A."/>
            <person name="Hikosaka A."/>
            <person name="Suzuki A."/>
            <person name="Kondo M."/>
            <person name="van Heeringen S.J."/>
            <person name="Quigley I."/>
            <person name="Heinz S."/>
            <person name="Ogino H."/>
            <person name="Ochi H."/>
            <person name="Hellsten U."/>
            <person name="Lyons J.B."/>
            <person name="Simakov O."/>
            <person name="Putnam N."/>
            <person name="Stites J."/>
            <person name="Kuroki Y."/>
            <person name="Tanaka T."/>
            <person name="Michiue T."/>
            <person name="Watanabe M."/>
            <person name="Bogdanovic O."/>
            <person name="Lister R."/>
            <person name="Georgiou G."/>
            <person name="Paranjpe S.S."/>
            <person name="van Kruijsbergen I."/>
            <person name="Shu S."/>
            <person name="Carlson J."/>
            <person name="Kinoshita T."/>
            <person name="Ohta Y."/>
            <person name="Mawaribuchi S."/>
            <person name="Jenkins J."/>
            <person name="Grimwood J."/>
            <person name="Schmutz J."/>
            <person name="Mitros T."/>
            <person name="Mozaffari S.V."/>
            <person name="Suzuki Y."/>
            <person name="Haramoto Y."/>
            <person name="Yamamoto T.S."/>
            <person name="Takagi C."/>
            <person name="Heald R."/>
            <person name="Miller K."/>
            <person name="Haudenschild C."/>
            <person name="Kitzman J."/>
            <person name="Nakayama T."/>
            <person name="Izutsu Y."/>
            <person name="Robert J."/>
            <person name="Fortriede J."/>
            <person name="Burns K."/>
            <person name="Lotay V."/>
            <person name="Karimi K."/>
            <person name="Yasuoka Y."/>
            <person name="Dichmann D.S."/>
            <person name="Flajnik M.F."/>
            <person name="Houston D.W."/>
            <person name="Shendure J."/>
            <person name="DuPasquier L."/>
            <person name="Vize P.D."/>
            <person name="Zorn A.M."/>
            <person name="Ito M."/>
            <person name="Marcotte E.M."/>
            <person name="Wallingford J.B."/>
            <person name="Ito Y."/>
            <person name="Asashima M."/>
            <person name="Ueno N."/>
            <person name="Matsuda Y."/>
            <person name="Veenstra G.J."/>
            <person name="Fujiyama A."/>
            <person name="Harland R.M."/>
            <person name="Taira M."/>
            <person name="Rokhsar D.S."/>
        </authorList>
    </citation>
    <scope>NUCLEOTIDE SEQUENCE [LARGE SCALE GENOMIC DNA]</scope>
    <source>
        <strain evidence="11">J</strain>
    </source>
</reference>
<reference evidence="9" key="2">
    <citation type="submission" date="2004-10" db="EMBL/GenBank/DDBJ databases">
        <authorList>
            <consortium name="NIH - Xenopus Gene Collection (XGC) project"/>
        </authorList>
    </citation>
    <scope>NUCLEOTIDE SEQUENCE [LARGE SCALE MRNA]</scope>
    <source>
        <tissue evidence="9">Embryo</tissue>
    </source>
</reference>
<reference evidence="7" key="3">
    <citation type="journal article" date="2016" name="Nucleosides Nucleotides Nucleic Acids">
        <title>Gene duplications and losses among vertebrate deoxyribonucleoside kinases of the non-TK1 Family.</title>
        <authorList>
            <person name="Mutahir Z."/>
            <person name="Christiansen L.S."/>
            <person name="Clausen A.R."/>
            <person name="Berchtold M.W."/>
            <person name="Gojkovic Z."/>
            <person name="Munch-Petersen B."/>
            <person name="Knecht W."/>
            <person name="Piskur J."/>
        </authorList>
    </citation>
    <scope>FUNCTION</scope>
    <scope>CATALYTIC ACTIVITY</scope>
    <scope>BIOPHYSICOCHEMICAL PROPERTIES</scope>
</reference>
<name>DCK1_XENLA</name>